<dbReference type="EMBL" id="X82550">
    <property type="protein sequence ID" value="CAA57899.1"/>
    <property type="molecule type" value="mRNA"/>
</dbReference>
<dbReference type="PIR" id="JC4278">
    <property type="entry name" value="JC4278"/>
</dbReference>
<dbReference type="RefSeq" id="NP_620783.1">
    <property type="nucleotide sequence ID" value="NM_139083.2"/>
</dbReference>
<dbReference type="PDB" id="7QGG">
    <property type="method" value="EM"/>
    <property type="resolution" value="2.86 A"/>
    <property type="chains" value="o=1-25"/>
</dbReference>
<dbReference type="PDBsum" id="7QGG"/>
<dbReference type="EMDB" id="EMD-13954"/>
<dbReference type="SMR" id="P62948"/>
<dbReference type="GeneID" id="124440"/>
<dbReference type="KEGG" id="rno:124440"/>
<dbReference type="UCSC" id="RGD:621210">
    <property type="organism name" value="rat"/>
</dbReference>
<dbReference type="AGR" id="RGD:621210"/>
<dbReference type="CTD" id="6171"/>
<dbReference type="RGD" id="621210">
    <property type="gene designation" value="Rpl41"/>
</dbReference>
<dbReference type="eggNOG" id="ENOG502TDY0">
    <property type="taxonomic scope" value="Eukaryota"/>
</dbReference>
<dbReference type="HOGENOM" id="CLU_220499_1_0_1"/>
<dbReference type="InParanoid" id="P62948"/>
<dbReference type="PRO" id="PR:P62948"/>
<dbReference type="Proteomes" id="UP000002494">
    <property type="component" value="Chromosome 7"/>
</dbReference>
<dbReference type="Bgee" id="ENSRNOG00000042233">
    <property type="expression patterns" value="Expressed in thymus and 20 other cell types or tissues"/>
</dbReference>
<dbReference type="GO" id="GO:0005737">
    <property type="term" value="C:cytoplasm"/>
    <property type="evidence" value="ECO:0000266"/>
    <property type="project" value="RGD"/>
</dbReference>
<dbReference type="GO" id="GO:0022625">
    <property type="term" value="C:cytosolic large ribosomal subunit"/>
    <property type="evidence" value="ECO:0000266"/>
    <property type="project" value="RGD"/>
</dbReference>
<dbReference type="GO" id="GO:0003730">
    <property type="term" value="F:mRNA 3'-UTR binding"/>
    <property type="evidence" value="ECO:0000266"/>
    <property type="project" value="RGD"/>
</dbReference>
<dbReference type="GO" id="GO:0048027">
    <property type="term" value="F:mRNA 5'-UTR binding"/>
    <property type="evidence" value="ECO:0000266"/>
    <property type="project" value="RGD"/>
</dbReference>
<dbReference type="GO" id="GO:0003735">
    <property type="term" value="F:structural constituent of ribosome"/>
    <property type="evidence" value="ECO:0000266"/>
    <property type="project" value="RGD"/>
</dbReference>
<dbReference type="GO" id="GO:0002181">
    <property type="term" value="P:cytoplasmic translation"/>
    <property type="evidence" value="ECO:0000266"/>
    <property type="project" value="RGD"/>
</dbReference>
<dbReference type="GO" id="GO:0006412">
    <property type="term" value="P:translation"/>
    <property type="evidence" value="ECO:0000304"/>
    <property type="project" value="RGD"/>
</dbReference>
<dbReference type="InterPro" id="IPR007836">
    <property type="entry name" value="Ribosomal_eS32"/>
</dbReference>
<dbReference type="Pfam" id="PF05162">
    <property type="entry name" value="Ribosomal_L41"/>
    <property type="match status" value="1"/>
</dbReference>
<organism>
    <name type="scientific">Rattus norvegicus</name>
    <name type="common">Rat</name>
    <dbReference type="NCBI Taxonomy" id="10116"/>
    <lineage>
        <taxon>Eukaryota</taxon>
        <taxon>Metazoa</taxon>
        <taxon>Chordata</taxon>
        <taxon>Craniata</taxon>
        <taxon>Vertebrata</taxon>
        <taxon>Euteleostomi</taxon>
        <taxon>Mammalia</taxon>
        <taxon>Eutheria</taxon>
        <taxon>Euarchontoglires</taxon>
        <taxon>Glires</taxon>
        <taxon>Rodentia</taxon>
        <taxon>Myomorpha</taxon>
        <taxon>Muroidea</taxon>
        <taxon>Muridae</taxon>
        <taxon>Murinae</taxon>
        <taxon>Rattus</taxon>
    </lineage>
</organism>
<gene>
    <name type="primary">Rpl41</name>
</gene>
<keyword id="KW-0002">3D-structure</keyword>
<keyword id="KW-0963">Cytoplasm</keyword>
<keyword id="KW-1185">Reference proteome</keyword>
<keyword id="KW-0687">Ribonucleoprotein</keyword>
<keyword id="KW-0689">Ribosomal protein</keyword>
<protein>
    <recommendedName>
        <fullName evidence="5">Small ribosomal subunit protein eS32</fullName>
    </recommendedName>
    <alternativeName>
        <fullName>60S ribosomal protein L41</fullName>
    </alternativeName>
    <alternativeName>
        <fullName evidence="4">Large ribosomal subunit protein eL41</fullName>
    </alternativeName>
</protein>
<reference key="1">
    <citation type="journal article" date="1995" name="Biochem. Biophys. Res. Commun.">
        <title>The primary structures of rat ribosomal proteins L4 and L41.</title>
        <authorList>
            <person name="Chan Y.-L."/>
            <person name="Olvera J."/>
            <person name="Wool I.G."/>
        </authorList>
    </citation>
    <scope>NUCLEOTIDE SEQUENCE [MRNA]</scope>
    <source>
        <strain>Sprague-Dawley</strain>
        <tissue>Liver</tissue>
    </source>
</reference>
<reference key="2">
    <citation type="unpublished observations" date="2023-10">
        <authorList>
            <person name="Leibundgut M.A."/>
            <person name="Ban N."/>
        </authorList>
    </citation>
    <scope>REVISION OF SUBUNIT</scope>
    <scope>NOMENCLATURE</scope>
</reference>
<comment type="function">
    <text evidence="1 2 5">Component of the small ribosomal subunit (Probable) (Ref.2). The ribosome is a large ribonucleoprotein complex responsible for the synthesis of proteins in the cell (By similarity). Interacts with the beta subunit of protein kinase CKII and stimulates phosphorylation of DNA topoisomerase II alpha by CKII (By similarity).</text>
</comment>
<comment type="subunit">
    <text evidence="2">Component of the large ribosomal subunit.</text>
</comment>
<comment type="subcellular location">
    <subcellularLocation>
        <location evidence="2">Cytoplasm</location>
    </subcellularLocation>
</comment>
<comment type="miscellaneous">
    <text evidence="5">Initially thought to be part of the large ribosomal subunit. Crystal structures show eS32/eL41 to be a small ribosomal subunit forming a bridge at the interface of the 2 subunits.</text>
</comment>
<comment type="similarity">
    <text evidence="4">Belongs to the eukaryotic ribosomal protein eS32 family.</text>
</comment>
<evidence type="ECO:0000250" key="1">
    <source>
        <dbReference type="UniProtKB" id="P62945"/>
    </source>
</evidence>
<evidence type="ECO:0000250" key="2">
    <source>
        <dbReference type="UniProtKB" id="P62947"/>
    </source>
</evidence>
<evidence type="ECO:0000256" key="3">
    <source>
        <dbReference type="SAM" id="MobiDB-lite"/>
    </source>
</evidence>
<evidence type="ECO:0000305" key="4"/>
<evidence type="ECO:0000305" key="5">
    <source ref="2"/>
</evidence>
<accession>P62948</accession>
<accession>P28751</accession>
<name>RS32_RAT</name>
<proteinExistence type="evidence at protein level"/>
<feature type="chain" id="PRO_0000198057" description="Small ribosomal subunit protein eS32">
    <location>
        <begin position="1"/>
        <end position="25"/>
    </location>
</feature>
<feature type="region of interest" description="Disordered" evidence="3">
    <location>
        <begin position="1"/>
        <end position="25"/>
    </location>
</feature>
<sequence>MRAKWRKKRMRRLKRKRRKMRQRSK</sequence>